<keyword id="KW-1185">Reference proteome</keyword>
<keyword id="KW-0687">Ribonucleoprotein</keyword>
<keyword id="KW-0689">Ribosomal protein</keyword>
<sequence>MKARELQELRQGSSPQDLQEKVQDLKSELFNLRFQLATGQLENPMRIREVKKSIAQIKTILREKELRAFEQ</sequence>
<proteinExistence type="inferred from homology"/>
<reference key="1">
    <citation type="journal article" date="2008" name="Proc. Natl. Acad. Sci. U.S.A.">
        <title>The genome of Clostridium kluyveri, a strict anaerobe with unique metabolic features.</title>
        <authorList>
            <person name="Seedorf H."/>
            <person name="Fricke W.F."/>
            <person name="Veith B."/>
            <person name="Brueggemann H."/>
            <person name="Liesegang H."/>
            <person name="Strittmatter A."/>
            <person name="Miethke M."/>
            <person name="Buckel W."/>
            <person name="Hinderberger J."/>
            <person name="Li F."/>
            <person name="Hagemeier C."/>
            <person name="Thauer R.K."/>
            <person name="Gottschalk G."/>
        </authorList>
    </citation>
    <scope>NUCLEOTIDE SEQUENCE [LARGE SCALE GENOMIC DNA]</scope>
    <source>
        <strain>ATCC 8527 / DSM 555 / NBRC 12016 / NCIMB 10680 / K1</strain>
    </source>
</reference>
<gene>
    <name evidence="1" type="primary">rpmC</name>
    <name type="ordered locus">CKL_0232</name>
</gene>
<feature type="chain" id="PRO_1000079879" description="Large ribosomal subunit protein uL29">
    <location>
        <begin position="1"/>
        <end position="71"/>
    </location>
</feature>
<feature type="region of interest" description="Disordered" evidence="2">
    <location>
        <begin position="1"/>
        <end position="20"/>
    </location>
</feature>
<dbReference type="EMBL" id="CP000673">
    <property type="protein sequence ID" value="EDK32286.1"/>
    <property type="molecule type" value="Genomic_DNA"/>
</dbReference>
<dbReference type="RefSeq" id="WP_011988811.1">
    <property type="nucleotide sequence ID" value="NC_009706.1"/>
</dbReference>
<dbReference type="SMR" id="A5N4Q5"/>
<dbReference type="STRING" id="431943.CKL_0232"/>
<dbReference type="KEGG" id="ckl:CKL_0232"/>
<dbReference type="eggNOG" id="COG0255">
    <property type="taxonomic scope" value="Bacteria"/>
</dbReference>
<dbReference type="HOGENOM" id="CLU_158491_5_2_9"/>
<dbReference type="Proteomes" id="UP000002411">
    <property type="component" value="Chromosome"/>
</dbReference>
<dbReference type="GO" id="GO:0022625">
    <property type="term" value="C:cytosolic large ribosomal subunit"/>
    <property type="evidence" value="ECO:0007669"/>
    <property type="project" value="TreeGrafter"/>
</dbReference>
<dbReference type="GO" id="GO:0003735">
    <property type="term" value="F:structural constituent of ribosome"/>
    <property type="evidence" value="ECO:0007669"/>
    <property type="project" value="InterPro"/>
</dbReference>
<dbReference type="GO" id="GO:0006412">
    <property type="term" value="P:translation"/>
    <property type="evidence" value="ECO:0007669"/>
    <property type="project" value="UniProtKB-UniRule"/>
</dbReference>
<dbReference type="CDD" id="cd00427">
    <property type="entry name" value="Ribosomal_L29_HIP"/>
    <property type="match status" value="1"/>
</dbReference>
<dbReference type="FunFam" id="1.10.287.310:FF:000001">
    <property type="entry name" value="50S ribosomal protein L29"/>
    <property type="match status" value="1"/>
</dbReference>
<dbReference type="Gene3D" id="1.10.287.310">
    <property type="match status" value="1"/>
</dbReference>
<dbReference type="HAMAP" id="MF_00374">
    <property type="entry name" value="Ribosomal_uL29"/>
    <property type="match status" value="1"/>
</dbReference>
<dbReference type="InterPro" id="IPR050063">
    <property type="entry name" value="Ribosomal_protein_uL29"/>
</dbReference>
<dbReference type="InterPro" id="IPR001854">
    <property type="entry name" value="Ribosomal_uL29"/>
</dbReference>
<dbReference type="InterPro" id="IPR018254">
    <property type="entry name" value="Ribosomal_uL29_CS"/>
</dbReference>
<dbReference type="InterPro" id="IPR036049">
    <property type="entry name" value="Ribosomal_uL29_sf"/>
</dbReference>
<dbReference type="NCBIfam" id="TIGR00012">
    <property type="entry name" value="L29"/>
    <property type="match status" value="1"/>
</dbReference>
<dbReference type="PANTHER" id="PTHR10916">
    <property type="entry name" value="60S RIBOSOMAL PROTEIN L35/50S RIBOSOMAL PROTEIN L29"/>
    <property type="match status" value="1"/>
</dbReference>
<dbReference type="PANTHER" id="PTHR10916:SF0">
    <property type="entry name" value="LARGE RIBOSOMAL SUBUNIT PROTEIN UL29C"/>
    <property type="match status" value="1"/>
</dbReference>
<dbReference type="Pfam" id="PF00831">
    <property type="entry name" value="Ribosomal_L29"/>
    <property type="match status" value="1"/>
</dbReference>
<dbReference type="SUPFAM" id="SSF46561">
    <property type="entry name" value="Ribosomal protein L29 (L29p)"/>
    <property type="match status" value="1"/>
</dbReference>
<dbReference type="PROSITE" id="PS00579">
    <property type="entry name" value="RIBOSOMAL_L29"/>
    <property type="match status" value="1"/>
</dbReference>
<protein>
    <recommendedName>
        <fullName evidence="1">Large ribosomal subunit protein uL29</fullName>
    </recommendedName>
    <alternativeName>
        <fullName evidence="3">50S ribosomal protein L29</fullName>
    </alternativeName>
</protein>
<accession>A5N4Q5</accession>
<comment type="similarity">
    <text evidence="1">Belongs to the universal ribosomal protein uL29 family.</text>
</comment>
<evidence type="ECO:0000255" key="1">
    <source>
        <dbReference type="HAMAP-Rule" id="MF_00374"/>
    </source>
</evidence>
<evidence type="ECO:0000256" key="2">
    <source>
        <dbReference type="SAM" id="MobiDB-lite"/>
    </source>
</evidence>
<evidence type="ECO:0000305" key="3"/>
<organism>
    <name type="scientific">Clostridium kluyveri (strain ATCC 8527 / DSM 555 / NBRC 12016 / NCIMB 10680 / K1)</name>
    <dbReference type="NCBI Taxonomy" id="431943"/>
    <lineage>
        <taxon>Bacteria</taxon>
        <taxon>Bacillati</taxon>
        <taxon>Bacillota</taxon>
        <taxon>Clostridia</taxon>
        <taxon>Eubacteriales</taxon>
        <taxon>Clostridiaceae</taxon>
        <taxon>Clostridium</taxon>
    </lineage>
</organism>
<name>RL29_CLOK5</name>